<name>KDGD_ARTS2</name>
<proteinExistence type="inferred from homology"/>
<comment type="catalytic activity">
    <reaction evidence="1">
        <text>5-dehydro-4-deoxy-D-glucarate + H(+) = 2,5-dioxopentanoate + CO2 + H2O</text>
        <dbReference type="Rhea" id="RHEA:24608"/>
        <dbReference type="ChEBI" id="CHEBI:15377"/>
        <dbReference type="ChEBI" id="CHEBI:15378"/>
        <dbReference type="ChEBI" id="CHEBI:16526"/>
        <dbReference type="ChEBI" id="CHEBI:42819"/>
        <dbReference type="ChEBI" id="CHEBI:58136"/>
        <dbReference type="EC" id="4.2.1.41"/>
    </reaction>
</comment>
<comment type="pathway">
    <text evidence="1">Carbohydrate acid metabolism; D-glucarate degradation; 2,5-dioxopentanoate from D-glucarate: step 2/2.</text>
</comment>
<comment type="similarity">
    <text evidence="1">Belongs to the DapA family.</text>
</comment>
<accession>A0JQW8</accession>
<feature type="chain" id="PRO_1000045398" description="Probable 5-dehydro-4-deoxyglucarate dehydratase">
    <location>
        <begin position="1"/>
        <end position="304"/>
    </location>
</feature>
<sequence>MAKHSPQELASVLKDGLLSFPVTSFDSQLQFDEENYRKHLAWQASYPVAGLFAAGGTGEGFSLTPAESARVVRAAVEEVGSTVPVLASAGGSTAQAIENAQAAEAAGAEGILLLPPYLTEADQGGLIEHVSAVCSATSLGVIIYNRANAIYKDTTVAALADRHESLIGFKDGVGDLEHDARVYAKLGDRLFYLGGLPTAETFALPLLQLGMSTYSSAMYNFVPQFALDFYQDVRNHDRVAVNKKLNDFVIPYLDIRDRVKGYSVSIVKGGLDAIGRSAGGVRPPLQNLAPQDLADLKALIATVS</sequence>
<keyword id="KW-0456">Lyase</keyword>
<keyword id="KW-1185">Reference proteome</keyword>
<evidence type="ECO:0000255" key="1">
    <source>
        <dbReference type="HAMAP-Rule" id="MF_00694"/>
    </source>
</evidence>
<organism>
    <name type="scientific">Arthrobacter sp. (strain FB24)</name>
    <dbReference type="NCBI Taxonomy" id="290399"/>
    <lineage>
        <taxon>Bacteria</taxon>
        <taxon>Bacillati</taxon>
        <taxon>Actinomycetota</taxon>
        <taxon>Actinomycetes</taxon>
        <taxon>Micrococcales</taxon>
        <taxon>Micrococcaceae</taxon>
        <taxon>Arthrobacter</taxon>
    </lineage>
</organism>
<reference key="1">
    <citation type="journal article" date="2013" name="Stand. Genomic Sci.">
        <title>Complete genome sequence of Arthrobacter sp. strain FB24.</title>
        <authorList>
            <person name="Nakatsu C.H."/>
            <person name="Barabote R."/>
            <person name="Thompson S."/>
            <person name="Bruce D."/>
            <person name="Detter C."/>
            <person name="Brettin T."/>
            <person name="Han C."/>
            <person name="Beasley F."/>
            <person name="Chen W."/>
            <person name="Konopka A."/>
            <person name="Xie G."/>
        </authorList>
    </citation>
    <scope>NUCLEOTIDE SEQUENCE [LARGE SCALE GENOMIC DNA]</scope>
    <source>
        <strain>FB24</strain>
    </source>
</reference>
<gene>
    <name type="ordered locus">Arth_0037</name>
</gene>
<protein>
    <recommendedName>
        <fullName evidence="1">Probable 5-dehydro-4-deoxyglucarate dehydratase</fullName>
        <ecNumber evidence="1">4.2.1.41</ecNumber>
    </recommendedName>
    <alternativeName>
        <fullName evidence="1">5-keto-4-deoxy-glucarate dehydratase</fullName>
        <shortName evidence="1">KDGDH</shortName>
    </alternativeName>
</protein>
<dbReference type="EC" id="4.2.1.41" evidence="1"/>
<dbReference type="EMBL" id="CP000454">
    <property type="protein sequence ID" value="ABK01438.1"/>
    <property type="molecule type" value="Genomic_DNA"/>
</dbReference>
<dbReference type="RefSeq" id="WP_011689908.1">
    <property type="nucleotide sequence ID" value="NC_008541.1"/>
</dbReference>
<dbReference type="SMR" id="A0JQW8"/>
<dbReference type="STRING" id="290399.Arth_0037"/>
<dbReference type="KEGG" id="art:Arth_0037"/>
<dbReference type="eggNOG" id="COG0329">
    <property type="taxonomic scope" value="Bacteria"/>
</dbReference>
<dbReference type="HOGENOM" id="CLU_049343_5_2_11"/>
<dbReference type="OrthoDB" id="8995637at2"/>
<dbReference type="UniPathway" id="UPA00564">
    <property type="reaction ID" value="UER00628"/>
</dbReference>
<dbReference type="Proteomes" id="UP000000754">
    <property type="component" value="Chromosome"/>
</dbReference>
<dbReference type="GO" id="GO:0008840">
    <property type="term" value="F:4-hydroxy-tetrahydrodipicolinate synthase activity"/>
    <property type="evidence" value="ECO:0007669"/>
    <property type="project" value="TreeGrafter"/>
</dbReference>
<dbReference type="GO" id="GO:0047448">
    <property type="term" value="F:5-dehydro-4-deoxyglucarate dehydratase activity"/>
    <property type="evidence" value="ECO:0007669"/>
    <property type="project" value="UniProtKB-UniRule"/>
</dbReference>
<dbReference type="GO" id="GO:0042838">
    <property type="term" value="P:D-glucarate catabolic process"/>
    <property type="evidence" value="ECO:0007669"/>
    <property type="project" value="UniProtKB-UniRule"/>
</dbReference>
<dbReference type="CDD" id="cd00951">
    <property type="entry name" value="KDGDH"/>
    <property type="match status" value="1"/>
</dbReference>
<dbReference type="Gene3D" id="3.20.20.70">
    <property type="entry name" value="Aldolase class I"/>
    <property type="match status" value="1"/>
</dbReference>
<dbReference type="HAMAP" id="MF_00694">
    <property type="entry name" value="KDGDH"/>
    <property type="match status" value="1"/>
</dbReference>
<dbReference type="InterPro" id="IPR013785">
    <property type="entry name" value="Aldolase_TIM"/>
</dbReference>
<dbReference type="InterPro" id="IPR002220">
    <property type="entry name" value="DapA-like"/>
</dbReference>
<dbReference type="InterPro" id="IPR017655">
    <property type="entry name" value="Dehydro-deoxyglucarate_dehyd"/>
</dbReference>
<dbReference type="NCBIfam" id="TIGR03249">
    <property type="entry name" value="KdgD"/>
    <property type="match status" value="1"/>
</dbReference>
<dbReference type="NCBIfam" id="NF002958">
    <property type="entry name" value="PRK03620.1"/>
    <property type="match status" value="1"/>
</dbReference>
<dbReference type="PANTHER" id="PTHR12128:SF19">
    <property type="entry name" value="5-DEHYDRO-4-DEOXYGLUCARATE DEHYDRATASE 2-RELATED"/>
    <property type="match status" value="1"/>
</dbReference>
<dbReference type="PANTHER" id="PTHR12128">
    <property type="entry name" value="DIHYDRODIPICOLINATE SYNTHASE"/>
    <property type="match status" value="1"/>
</dbReference>
<dbReference type="Pfam" id="PF00701">
    <property type="entry name" value="DHDPS"/>
    <property type="match status" value="1"/>
</dbReference>
<dbReference type="PIRSF" id="PIRSF001365">
    <property type="entry name" value="DHDPS"/>
    <property type="match status" value="1"/>
</dbReference>
<dbReference type="PRINTS" id="PR00146">
    <property type="entry name" value="DHPICSNTHASE"/>
</dbReference>
<dbReference type="SMART" id="SM01130">
    <property type="entry name" value="DHDPS"/>
    <property type="match status" value="1"/>
</dbReference>
<dbReference type="SUPFAM" id="SSF51569">
    <property type="entry name" value="Aldolase"/>
    <property type="match status" value="1"/>
</dbReference>